<name>PF2R_SHEEP</name>
<sequence>MSTNNSVQPVSPASELLSNTTCQLEEDLSISFSIIFMTVGILSNSLAIAILMKAYQRFRQKYKSSFLLLASALVITDFFGHLINGTIAVFVYASDKDWIYFDKSNILCSIFGICMVFSGLCPLFLGSLMAIERCIGVTKPIFHSTKITTKHVKMMLSGVCFFAVFVALLPILGHRDYKIQASRTWCFYKTDQIKDWEDRFYLLLFAFLGLLALGISFVCNAITGISLLKVKFRSQQHRQGRSHHFEMVIQLLGIMCVSCICWSPFLVTMASIGMNIQDFKDSCERTLFTLRMATWNQILDPWVYILLRKAVLRNLYVCTRRCCGVHVISLHVWELSSIKNSLKVAAISDLPVTEKVTQQTST</sequence>
<comment type="function">
    <text>Receptor for prostaglandin F2-alpha (PGF2-alpha). The activity of this receptor is mediated by G proteins which activate a phosphatidylinositol-calcium second messenger system. Initiates luteolysis in the corpus luteum.</text>
</comment>
<comment type="subcellular location">
    <subcellularLocation>
        <location>Cell membrane</location>
        <topology>Multi-pass membrane protein</topology>
    </subcellularLocation>
</comment>
<comment type="alternative products">
    <event type="alternative splicing"/>
    <isoform>
        <id>Q28905-1</id>
        <name>FP-A</name>
        <sequence type="displayed"/>
    </isoform>
    <isoform>
        <id>Q28905-2</id>
        <name>FP-B</name>
        <sequence type="described" ref="VSP_001951"/>
    </isoform>
    <text>Isoform FP-A and isoform FP-B have identical ligand binding properties but different G protein coupling properties.</text>
</comment>
<comment type="developmental stage">
    <text>Expression is high in the midluteal phase corpus luteum and decreases during luteolysis.</text>
</comment>
<comment type="miscellaneous">
    <molecule>Isoform FP-B</molecule>
    <text evidence="3">Shows agonist-independent constitutive activity, but is still responsive to agonist.</text>
</comment>
<comment type="similarity">
    <text evidence="2">Belongs to the G-protein coupled receptor 1 family.</text>
</comment>
<proteinExistence type="evidence at transcript level"/>
<keyword id="KW-0025">Alternative splicing</keyword>
<keyword id="KW-1003">Cell membrane</keyword>
<keyword id="KW-1015">Disulfide bond</keyword>
<keyword id="KW-0297">G-protein coupled receptor</keyword>
<keyword id="KW-0325">Glycoprotein</keyword>
<keyword id="KW-0472">Membrane</keyword>
<keyword id="KW-0675">Receptor</keyword>
<keyword id="KW-1185">Reference proteome</keyword>
<keyword id="KW-0807">Transducer</keyword>
<keyword id="KW-0812">Transmembrane</keyword>
<keyword id="KW-1133">Transmembrane helix</keyword>
<protein>
    <recommendedName>
        <fullName>Prostaglandin F2-alpha receptor</fullName>
        <shortName>PGF receptor</shortName>
        <shortName>PGF2-alpha receptor</shortName>
    </recommendedName>
    <alternativeName>
        <fullName>Prostanoid FP receptor</fullName>
    </alternativeName>
</protein>
<accession>Q28905</accession>
<dbReference type="EMBL" id="U73798">
    <property type="protein sequence ID" value="AAB51070.1"/>
    <property type="molecule type" value="mRNA"/>
</dbReference>
<dbReference type="RefSeq" id="NP_001009789.1">
    <property type="nucleotide sequence ID" value="NM_001009789.2"/>
</dbReference>
<dbReference type="RefSeq" id="XP_012017550.1">
    <molecule id="Q28905-1"/>
    <property type="nucleotide sequence ID" value="XM_012162160.5"/>
</dbReference>
<dbReference type="RefSeq" id="XP_012018243.1">
    <molecule id="Q28905-1"/>
    <property type="nucleotide sequence ID" value="XM_012162853.5"/>
</dbReference>
<dbReference type="SMR" id="Q28905"/>
<dbReference type="STRING" id="9940.ENSOARP00000014365"/>
<dbReference type="BindingDB" id="Q28905"/>
<dbReference type="ChEMBL" id="CHEMBL1909491"/>
<dbReference type="GlyCosmos" id="Q28905">
    <property type="glycosylation" value="2 sites, No reported glycans"/>
</dbReference>
<dbReference type="PaxDb" id="9940-ENSOARP00000014365"/>
<dbReference type="Ensembl" id="ENSOART00020030359">
    <molecule id="Q28905-1"/>
    <property type="protein sequence ID" value="ENSOARP00020025094"/>
    <property type="gene ID" value="ENSOARG00020019699"/>
</dbReference>
<dbReference type="Ensembl" id="ENSOART00180008012">
    <molecule id="Q28905-1"/>
    <property type="protein sequence ID" value="ENSOARP00180004058"/>
    <property type="gene ID" value="ENSOARG00180004938"/>
</dbReference>
<dbReference type="Ensembl" id="ENSOART00215032173">
    <molecule id="Q28905-1"/>
    <property type="protein sequence ID" value="ENSOARP00215016958"/>
    <property type="gene ID" value="ENSOARG00215019155"/>
</dbReference>
<dbReference type="Ensembl" id="ENSOART00220003105">
    <molecule id="Q28905-1"/>
    <property type="protein sequence ID" value="ENSOARP00220002163"/>
    <property type="gene ID" value="ENSOARG00220001707"/>
</dbReference>
<dbReference type="Ensembl" id="ENSOART00225047890">
    <molecule id="Q28905-1"/>
    <property type="protein sequence ID" value="ENSOARP00225023908"/>
    <property type="gene ID" value="ENSOARG00225029002"/>
</dbReference>
<dbReference type="Ensembl" id="ENSOART00260024644">
    <molecule id="Q28905-1"/>
    <property type="protein sequence ID" value="ENSOARP00260012344"/>
    <property type="gene ID" value="ENSOARG00260015257"/>
</dbReference>
<dbReference type="GeneID" id="443366"/>
<dbReference type="KEGG" id="oas:443366"/>
<dbReference type="CTD" id="5737"/>
<dbReference type="eggNOG" id="KOG3656">
    <property type="taxonomic scope" value="Eukaryota"/>
</dbReference>
<dbReference type="HOGENOM" id="CLU_045991_3_0_1"/>
<dbReference type="OMA" id="ILGHRNY"/>
<dbReference type="OrthoDB" id="5959154at2759"/>
<dbReference type="Proteomes" id="UP000002356">
    <property type="component" value="Chromosome 1"/>
</dbReference>
<dbReference type="Bgee" id="ENSOARG00000013402">
    <property type="expression patterns" value="Expressed in thyroid gland and 38 other cell types or tissues"/>
</dbReference>
<dbReference type="GO" id="GO:0005737">
    <property type="term" value="C:cytoplasm"/>
    <property type="evidence" value="ECO:0007669"/>
    <property type="project" value="Ensembl"/>
</dbReference>
<dbReference type="GO" id="GO:0005576">
    <property type="term" value="C:extracellular region"/>
    <property type="evidence" value="ECO:0007669"/>
    <property type="project" value="Ensembl"/>
</dbReference>
<dbReference type="GO" id="GO:0005886">
    <property type="term" value="C:plasma membrane"/>
    <property type="evidence" value="ECO:0007669"/>
    <property type="project" value="UniProtKB-SubCell"/>
</dbReference>
<dbReference type="GO" id="GO:0004958">
    <property type="term" value="F:prostaglandin F receptor activity"/>
    <property type="evidence" value="ECO:0007669"/>
    <property type="project" value="Ensembl"/>
</dbReference>
<dbReference type="GO" id="GO:0007189">
    <property type="term" value="P:adenylate cyclase-activating G protein-coupled receptor signaling pathway"/>
    <property type="evidence" value="ECO:0007669"/>
    <property type="project" value="TreeGrafter"/>
</dbReference>
<dbReference type="GO" id="GO:0071799">
    <property type="term" value="P:cellular response to prostaglandin D stimulus"/>
    <property type="evidence" value="ECO:0007669"/>
    <property type="project" value="Ensembl"/>
</dbReference>
<dbReference type="GO" id="GO:0006954">
    <property type="term" value="P:inflammatory response"/>
    <property type="evidence" value="ECO:0007669"/>
    <property type="project" value="TreeGrafter"/>
</dbReference>
<dbReference type="GO" id="GO:0043066">
    <property type="term" value="P:negative regulation of apoptotic process"/>
    <property type="evidence" value="ECO:0007669"/>
    <property type="project" value="Ensembl"/>
</dbReference>
<dbReference type="GO" id="GO:0008284">
    <property type="term" value="P:positive regulation of cell population proliferation"/>
    <property type="evidence" value="ECO:0007669"/>
    <property type="project" value="Ensembl"/>
</dbReference>
<dbReference type="GO" id="GO:0007204">
    <property type="term" value="P:positive regulation of cytosolic calcium ion concentration"/>
    <property type="evidence" value="ECO:0007669"/>
    <property type="project" value="TreeGrafter"/>
</dbReference>
<dbReference type="GO" id="GO:0010628">
    <property type="term" value="P:positive regulation of gene expression"/>
    <property type="evidence" value="ECO:0007669"/>
    <property type="project" value="Ensembl"/>
</dbReference>
<dbReference type="GO" id="GO:0032355">
    <property type="term" value="P:response to estradiol"/>
    <property type="evidence" value="ECO:0007669"/>
    <property type="project" value="Ensembl"/>
</dbReference>
<dbReference type="GO" id="GO:0032496">
    <property type="term" value="P:response to lipopolysaccharide"/>
    <property type="evidence" value="ECO:0007669"/>
    <property type="project" value="Ensembl"/>
</dbReference>
<dbReference type="CDD" id="cd15145">
    <property type="entry name" value="7tmA_FP"/>
    <property type="match status" value="1"/>
</dbReference>
<dbReference type="FunFam" id="1.20.1070.10:FF:000129">
    <property type="entry name" value="Prostaglandin F2-alpha receptor"/>
    <property type="match status" value="1"/>
</dbReference>
<dbReference type="Gene3D" id="1.20.1070.10">
    <property type="entry name" value="Rhodopsin 7-helix transmembrane proteins"/>
    <property type="match status" value="1"/>
</dbReference>
<dbReference type="InterPro" id="IPR000276">
    <property type="entry name" value="GPCR_Rhodpsn"/>
</dbReference>
<dbReference type="InterPro" id="IPR017452">
    <property type="entry name" value="GPCR_Rhodpsn_7TM"/>
</dbReference>
<dbReference type="InterPro" id="IPR000141">
    <property type="entry name" value="PglndnF_rcpt"/>
</dbReference>
<dbReference type="InterPro" id="IPR008365">
    <property type="entry name" value="Prostanoid_rcpt"/>
</dbReference>
<dbReference type="InterPro" id="IPR001244">
    <property type="entry name" value="Prostglndn_DP_rcpt"/>
</dbReference>
<dbReference type="PANTHER" id="PTHR11866">
    <property type="entry name" value="G-PROTEIN COUPLED RECEPTOR FAMILY 1 MEMBER"/>
    <property type="match status" value="1"/>
</dbReference>
<dbReference type="PANTHER" id="PTHR11866:SF4">
    <property type="entry name" value="PROSTAGLANDIN F2-ALPHA RECEPTOR"/>
    <property type="match status" value="1"/>
</dbReference>
<dbReference type="Pfam" id="PF00001">
    <property type="entry name" value="7tm_1"/>
    <property type="match status" value="1"/>
</dbReference>
<dbReference type="PRINTS" id="PR00428">
    <property type="entry name" value="PROSTAGLNDNR"/>
</dbReference>
<dbReference type="PRINTS" id="PR01788">
    <property type="entry name" value="PROSTANOIDR"/>
</dbReference>
<dbReference type="PRINTS" id="PR00855">
    <property type="entry name" value="PRSTNOIDFPR"/>
</dbReference>
<dbReference type="SUPFAM" id="SSF81321">
    <property type="entry name" value="Family A G protein-coupled receptor-like"/>
    <property type="match status" value="1"/>
</dbReference>
<dbReference type="PROSITE" id="PS00237">
    <property type="entry name" value="G_PROTEIN_RECEP_F1_1"/>
    <property type="match status" value="1"/>
</dbReference>
<dbReference type="PROSITE" id="PS50262">
    <property type="entry name" value="G_PROTEIN_RECEP_F1_2"/>
    <property type="match status" value="1"/>
</dbReference>
<organism>
    <name type="scientific">Ovis aries</name>
    <name type="common">Sheep</name>
    <dbReference type="NCBI Taxonomy" id="9940"/>
    <lineage>
        <taxon>Eukaryota</taxon>
        <taxon>Metazoa</taxon>
        <taxon>Chordata</taxon>
        <taxon>Craniata</taxon>
        <taxon>Vertebrata</taxon>
        <taxon>Euteleostomi</taxon>
        <taxon>Mammalia</taxon>
        <taxon>Eutheria</taxon>
        <taxon>Laurasiatheria</taxon>
        <taxon>Artiodactyla</taxon>
        <taxon>Ruminantia</taxon>
        <taxon>Pecora</taxon>
        <taxon>Bovidae</taxon>
        <taxon>Caprinae</taxon>
        <taxon>Ovis</taxon>
    </lineage>
</organism>
<gene>
    <name type="primary">PTGFR</name>
</gene>
<feature type="chain" id="PRO_0000070073" description="Prostaglandin F2-alpha receptor">
    <location>
        <begin position="1"/>
        <end position="362"/>
    </location>
</feature>
<feature type="topological domain" description="Extracellular" evidence="1">
    <location>
        <begin position="1"/>
        <end position="31"/>
    </location>
</feature>
<feature type="transmembrane region" description="Helical; Name=1" evidence="1">
    <location>
        <begin position="32"/>
        <end position="54"/>
    </location>
</feature>
<feature type="topological domain" description="Cytoplasmic" evidence="1">
    <location>
        <begin position="55"/>
        <end position="69"/>
    </location>
</feature>
<feature type="transmembrane region" description="Helical; Name=2" evidence="1">
    <location>
        <begin position="70"/>
        <end position="90"/>
    </location>
</feature>
<feature type="topological domain" description="Extracellular" evidence="1">
    <location>
        <begin position="91"/>
        <end position="109"/>
    </location>
</feature>
<feature type="transmembrane region" description="Helical; Name=3" evidence="1">
    <location>
        <begin position="110"/>
        <end position="131"/>
    </location>
</feature>
<feature type="topological domain" description="Cytoplasmic" evidence="1">
    <location>
        <begin position="132"/>
        <end position="152"/>
    </location>
</feature>
<feature type="transmembrane region" description="Helical; Name=4" evidence="1">
    <location>
        <begin position="153"/>
        <end position="175"/>
    </location>
</feature>
<feature type="topological domain" description="Extracellular" evidence="1">
    <location>
        <begin position="176"/>
        <end position="198"/>
    </location>
</feature>
<feature type="transmembrane region" description="Helical; Name=5" evidence="1">
    <location>
        <begin position="199"/>
        <end position="224"/>
    </location>
</feature>
<feature type="topological domain" description="Cytoplasmic" evidence="1">
    <location>
        <begin position="225"/>
        <end position="250"/>
    </location>
</feature>
<feature type="transmembrane region" description="Helical; Name=6" evidence="1">
    <location>
        <begin position="251"/>
        <end position="267"/>
    </location>
</feature>
<feature type="topological domain" description="Extracellular" evidence="1">
    <location>
        <begin position="268"/>
        <end position="285"/>
    </location>
</feature>
<feature type="transmembrane region" description="Helical; Name=7" evidence="1">
    <location>
        <begin position="286"/>
        <end position="307"/>
    </location>
</feature>
<feature type="topological domain" description="Cytoplasmic" evidence="1">
    <location>
        <begin position="308"/>
        <end position="362"/>
    </location>
</feature>
<feature type="glycosylation site" description="N-linked (GlcNAc...) asparagine" evidence="1">
    <location>
        <position position="4"/>
    </location>
</feature>
<feature type="glycosylation site" description="N-linked (GlcNAc...) asparagine" evidence="1">
    <location>
        <position position="19"/>
    </location>
</feature>
<feature type="disulfide bond" evidence="2">
    <location>
        <begin position="108"/>
        <end position="186"/>
    </location>
</feature>
<feature type="splice variant" id="VSP_001951" description="In isoform FP-B." evidence="3">
    <original>VCTRRCCGVHVISLHVWELSSIKNSLKVAAISDLPVTEKVTQQTST</original>
    <variation>I</variation>
    <location>
        <begin position="317"/>
        <end position="362"/>
    </location>
</feature>
<feature type="sequence conflict" description="In Ref. 2; AAB51070." evidence="3" ref="2">
    <original>S</original>
    <variation>C</variation>
    <location>
        <position position="6"/>
    </location>
</feature>
<reference key="1">
    <citation type="journal article" date="1995" name="Endocrinology">
        <title>Cloning of a receptor for prostaglandin F2 alpha from the ovine corpus luteum.</title>
        <authorList>
            <person name="Graves P.E."/>
            <person name="Pierce K.L."/>
            <person name="Bailey T.J."/>
            <person name="Rueda B.R."/>
            <person name="Gil D.W."/>
            <person name="Woodward D.F."/>
            <person name="Yool A.J."/>
            <person name="Hoyer P.B."/>
            <person name="Regan J.W."/>
        </authorList>
    </citation>
    <scope>NUCLEOTIDE SEQUENCE [MRNA]</scope>
    <source>
        <strain>Western range</strain>
        <tissue>Corpus luteum</tissue>
    </source>
</reference>
<reference key="2">
    <citation type="journal article" date="1997" name="J. Biol. Chem.">
        <title>Cloning of a carboxyl-terminal isoform of the prostanoid FP receptor.</title>
        <authorList>
            <person name="Pierce K.L."/>
            <person name="Bailey T.J."/>
            <person name="Hoyer P.B."/>
            <person name="Gil D.W."/>
            <person name="Woodward D.F."/>
            <person name="Regan J.W."/>
        </authorList>
    </citation>
    <scope>NUCLEOTIDE SEQUENCE [MRNA]</scope>
    <scope>ALTERNATIVE SPLICING</scope>
    <source>
        <tissue>Corpus luteum</tissue>
    </source>
</reference>
<evidence type="ECO:0000255" key="1"/>
<evidence type="ECO:0000255" key="2">
    <source>
        <dbReference type="PROSITE-ProRule" id="PRU00521"/>
    </source>
</evidence>
<evidence type="ECO:0000305" key="3"/>